<gene>
    <name evidence="5" type="primary">ucdA</name>
    <name type="ORF">HK57_00185</name>
</gene>
<organism>
    <name type="scientific">Aspergillus ustus</name>
    <dbReference type="NCBI Taxonomy" id="40382"/>
    <lineage>
        <taxon>Eukaryota</taxon>
        <taxon>Fungi</taxon>
        <taxon>Dikarya</taxon>
        <taxon>Ascomycota</taxon>
        <taxon>Pezizomycotina</taxon>
        <taxon>Eurotiomycetes</taxon>
        <taxon>Eurotiomycetidae</taxon>
        <taxon>Eurotiales</taxon>
        <taxon>Aspergillaceae</taxon>
        <taxon>Aspergillus</taxon>
        <taxon>Aspergillus subgen. Nidulantes</taxon>
    </lineage>
</organism>
<proteinExistence type="evidence at protein level"/>
<evidence type="ECO:0000250" key="1">
    <source>
        <dbReference type="UniProtKB" id="Q0CT94"/>
    </source>
</evidence>
<evidence type="ECO:0000255" key="2"/>
<evidence type="ECO:0000255" key="3">
    <source>
        <dbReference type="PROSITE-ProRule" id="PRU00258"/>
    </source>
</evidence>
<evidence type="ECO:0000269" key="4">
    <source>
    </source>
</evidence>
<evidence type="ECO:0000303" key="5">
    <source>
    </source>
</evidence>
<evidence type="ECO:0000305" key="6"/>
<dbReference type="EC" id="2.3.1.-" evidence="4"/>
<dbReference type="EMBL" id="JOMC01000221">
    <property type="protein sequence ID" value="KIA75356.1"/>
    <property type="molecule type" value="Genomic_DNA"/>
</dbReference>
<dbReference type="SMR" id="A0A0C1BUW8"/>
<dbReference type="Proteomes" id="UP000053475">
    <property type="component" value="Unassembled WGS sequence"/>
</dbReference>
<dbReference type="GO" id="GO:0031177">
    <property type="term" value="F:phosphopantetheine binding"/>
    <property type="evidence" value="ECO:0007669"/>
    <property type="project" value="InterPro"/>
</dbReference>
<dbReference type="GO" id="GO:0016740">
    <property type="term" value="F:transferase activity"/>
    <property type="evidence" value="ECO:0007669"/>
    <property type="project" value="UniProtKB-KW"/>
</dbReference>
<dbReference type="GO" id="GO:0031957">
    <property type="term" value="F:very long-chain fatty acid-CoA ligase activity"/>
    <property type="evidence" value="ECO:0007669"/>
    <property type="project" value="TreeGrafter"/>
</dbReference>
<dbReference type="GO" id="GO:0006633">
    <property type="term" value="P:fatty acid biosynthetic process"/>
    <property type="evidence" value="ECO:0007669"/>
    <property type="project" value="TreeGrafter"/>
</dbReference>
<dbReference type="Gene3D" id="3.30.300.30">
    <property type="match status" value="1"/>
</dbReference>
<dbReference type="Gene3D" id="1.10.1200.10">
    <property type="entry name" value="ACP-like"/>
    <property type="match status" value="1"/>
</dbReference>
<dbReference type="Gene3D" id="3.40.50.1820">
    <property type="entry name" value="alpha/beta hydrolase"/>
    <property type="match status" value="1"/>
</dbReference>
<dbReference type="Gene3D" id="3.40.50.12780">
    <property type="entry name" value="N-terminal domain of ligase-like"/>
    <property type="match status" value="1"/>
</dbReference>
<dbReference type="InterPro" id="IPR029058">
    <property type="entry name" value="AB_hydrolase_fold"/>
</dbReference>
<dbReference type="InterPro" id="IPR036736">
    <property type="entry name" value="ACP-like_sf"/>
</dbReference>
<dbReference type="InterPro" id="IPR045851">
    <property type="entry name" value="AMP-bd_C_sf"/>
</dbReference>
<dbReference type="InterPro" id="IPR000873">
    <property type="entry name" value="AMP-dep_synth/lig_dom"/>
</dbReference>
<dbReference type="InterPro" id="IPR042099">
    <property type="entry name" value="ANL_N_sf"/>
</dbReference>
<dbReference type="InterPro" id="IPR020806">
    <property type="entry name" value="PKS_PP-bd"/>
</dbReference>
<dbReference type="InterPro" id="IPR009081">
    <property type="entry name" value="PP-bd_ACP"/>
</dbReference>
<dbReference type="InterPro" id="IPR001031">
    <property type="entry name" value="Thioesterase"/>
</dbReference>
<dbReference type="PANTHER" id="PTHR24096">
    <property type="entry name" value="LONG-CHAIN-FATTY-ACID--COA LIGASE"/>
    <property type="match status" value="1"/>
</dbReference>
<dbReference type="PANTHER" id="PTHR24096:SF267">
    <property type="entry name" value="MALONATE--COA LIGASE ACSF3, MITOCHONDRIAL"/>
    <property type="match status" value="1"/>
</dbReference>
<dbReference type="Pfam" id="PF00501">
    <property type="entry name" value="AMP-binding"/>
    <property type="match status" value="1"/>
</dbReference>
<dbReference type="Pfam" id="PF00550">
    <property type="entry name" value="PP-binding"/>
    <property type="match status" value="1"/>
</dbReference>
<dbReference type="Pfam" id="PF00975">
    <property type="entry name" value="Thioesterase"/>
    <property type="match status" value="1"/>
</dbReference>
<dbReference type="SMART" id="SM00823">
    <property type="entry name" value="PKS_PP"/>
    <property type="match status" value="1"/>
</dbReference>
<dbReference type="SUPFAM" id="SSF56801">
    <property type="entry name" value="Acetyl-CoA synthetase-like"/>
    <property type="match status" value="1"/>
</dbReference>
<dbReference type="SUPFAM" id="SSF47336">
    <property type="entry name" value="ACP-like"/>
    <property type="match status" value="1"/>
</dbReference>
<dbReference type="SUPFAM" id="SSF53474">
    <property type="entry name" value="alpha/beta-Hydrolases"/>
    <property type="match status" value="1"/>
</dbReference>
<dbReference type="PROSITE" id="PS50075">
    <property type="entry name" value="CARRIER"/>
    <property type="match status" value="1"/>
</dbReference>
<feature type="chain" id="PRO_5012113451" description="Nonribosomal peptide synthetase ucdA">
    <location>
        <begin position="1"/>
        <end position="947"/>
    </location>
</feature>
<feature type="domain" description="Carrier" evidence="3">
    <location>
        <begin position="585"/>
        <end position="665"/>
    </location>
</feature>
<feature type="region of interest" description="Adenylation (A) domain" evidence="1 2">
    <location>
        <begin position="25"/>
        <end position="413"/>
    </location>
</feature>
<feature type="region of interest" description="Thioesterase (TE) domain" evidence="1 2">
    <location>
        <begin position="684"/>
        <end position="934"/>
    </location>
</feature>
<feature type="modified residue" description="O-(pantetheine 4'-phosphoryl)serine" evidence="3">
    <location>
        <position position="623"/>
    </location>
</feature>
<keyword id="KW-0596">Phosphopantetheine</keyword>
<keyword id="KW-0597">Phosphoprotein</keyword>
<keyword id="KW-1185">Reference proteome</keyword>
<keyword id="KW-0808">Transferase</keyword>
<name>UCDA_ASPUT</name>
<sequence length="947" mass="104294">MLIRNLLCLLERVAAEPMSGEIICYSPHANAGYCSWSYTQLLVEAQRASHALESTHGKALVPGSRVLLHFTSHWDNIVWFWAVLLAGCIPVMSTALPTNGFLRKAHLEHLARTLINPLCLTRAVSVSEFADQDAVNPIVIESLDLAKPLGPSNNPSGSRKHTRGLEDTAAVLLTSGSTGRCKAVCLSHGQVLAAARGKLDALPPADESFLNWISLDHVAALVEVHIQAMLARKTQIHVPAPYLVSQPTKLLDLVHAHRVSRTFAPNFFLARLREALKNCPTTTANENLNGATSIRADQPSRWDLSCLRCINSGGEPNKTRTCQEVSEALAQYGAPGNIIVPGFGMTETCAGAIFNQHCPRYDLDHQLEFASVGRCMPGISIRISAGLNSNQPVPIGQPGFFQVAGPVVFKEYFNNKHATTEAFTSDGWFKTGDLALIDERGHLSLTGRSKETMIVNGVNYDPQSVEDAVNEASIPGLVPSFSCCFSCLPAGSETEEICLVYLPTYQKDDVAARVETTASISRVVMMAVGVLPQVIPLDEAHLQKSSLGKLSRARVKAAYLRGEYNAQRNLNHDLIRAFRRETRTAPENEFERDLLAAVIDSLGPLDEDEFGVDTPILDLGITSIELIKLKKDLEASLRLHRDIPLITLLTHPTVRDLGTALRKLQGTQVYDPVIKLQAEGTKTPLWLVHPGVGEVLVFLNLAKFIKDRPVYAFRARGLGGDDERPFTNISEAVKTYYTALKHEQPNGPYAIAGYSYGSMLAFEISKLLEANNDRVSFIGSFNLPPHIKTRMRQLDFKECLLHLSYFLDLMTEARARELADELRDCSRDGALETVMQNASPTRLAELALSSSGLLRWANVAFALQSMAVDYEPTSSVSGLDCFYCIPLAVVAASKQQWLEDHLAKWNDFTRSPVRFHSVGGAHYTMLSPEHVFDFQKTLRRALENRGI</sequence>
<protein>
    <recommendedName>
        <fullName evidence="5">Nonribosomal peptide synthetase ucdA</fullName>
        <ecNumber evidence="4">2.3.1.-</ecNumber>
    </recommendedName>
    <alternativeName>
        <fullName evidence="5">Atromentin synthetase</fullName>
    </alternativeName>
    <alternativeName>
        <fullName evidence="5">Uscandidusin biosynthesis cluster protein A</fullName>
    </alternativeName>
</protein>
<reference key="1">
    <citation type="submission" date="2014-11" db="EMBL/GenBank/DDBJ databases">
        <title>Genomics derived discovery of secondary metabolites biosynthetic gene clusters in Aspergillus ustus.</title>
        <authorList>
            <person name="Pi B."/>
            <person name="Dai F."/>
            <person name="Song X."/>
            <person name="Zhu C."/>
            <person name="Li H."/>
            <person name="Yu D."/>
        </authorList>
    </citation>
    <scope>NUCLEOTIDE SEQUENCE [LARGE SCALE GENOMIC DNA]</scope>
    <source>
        <strain>3.3904</strain>
    </source>
</reference>
<reference key="2">
    <citation type="journal article" date="2023" name="Org. Lett.">
        <title>Biosynthesis of p-terphenyls in Aspergillus ustus implies enzymatic reductive dehydration and spontaneous dibenzofuran formation.</title>
        <authorList>
            <person name="Janzen D.J."/>
            <person name="Zhou J."/>
            <person name="Li S.M."/>
        </authorList>
    </citation>
    <scope>FUNCTION</scope>
    <scope>CATALYTIC ACTIVITY</scope>
    <scope>PATHWAY</scope>
</reference>
<accession>A0A0C1BUW8</accession>
<comment type="function">
    <text evidence="4">Nonribosomal peptide synthetase that mediates the biosynthesis of usterphenyllins and uscandidusins, p-terphenyl derivatives (PubMed:37607357). Within the pathway, ucdA condenses two 4-hydroxyphenylpyruvate (HPPA) units to produce atromentin. UcdA first activates HPPA through its A domain to AMP-HPPA. The HPPA unit is then loaded to the T domain and eventually transferred to the TE domain. Another HPPA unit is then loaded onto the T domain. The TE domain then catalyzes the condensation of the two HPPA units and the release of atromentin via cyclization (PubMed:37607357). The pathway begin with the biosynthesis of 4-hydroxyphenylpyruvate (HPPA) from L-tyrosine, possibly by the aminotransferase ucdG. The nonribosomal peptide synthetase ucdA then condenses two HPPA units to produce atromentin. The key step in this pathway is the reduction and dehydration of atromentin to form a terphenyl triol intermediate, performed by the NAD-dependent dehydrogenase ucdB. Further O-methylation by the methyltransferase ucdC forms terphenyllin carrying two methoxy moieties at C-9 and C-12, and subsequent dihydroxylation at C-3 of ring A and C-15 of ring C by the flavin-dependent oxygenase ucdD leads to 3,15-dihydroxyterphenyllin. Prenylation by ucdE at position C-5 of ring A forms usterphenyllin B, and is followed by a second prenylation at position C-14 of ring C to form usterphenyllin A. The following furan ring formation that leads to uscandidusins A and B was proven to be an unexpected spontaneous non-enzymatic reaction (PubMed:37607357).</text>
</comment>
<comment type="catalytic activity">
    <reaction evidence="4">
        <text>2 3-(4-hydroxyphenyl)pyruvate + 2 ATP = atromentin + 2 AMP + 2 diphosphate + H(+)</text>
        <dbReference type="Rhea" id="RHEA:63968"/>
        <dbReference type="ChEBI" id="CHEBI:15378"/>
        <dbReference type="ChEBI" id="CHEBI:30616"/>
        <dbReference type="ChEBI" id="CHEBI:33019"/>
        <dbReference type="ChEBI" id="CHEBI:36242"/>
        <dbReference type="ChEBI" id="CHEBI:149642"/>
        <dbReference type="ChEBI" id="CHEBI:456215"/>
    </reaction>
    <physiologicalReaction direction="left-to-right" evidence="4">
        <dbReference type="Rhea" id="RHEA:63969"/>
    </physiologicalReaction>
</comment>
<comment type="pathway">
    <text evidence="4">Secondary metabolite biosynthesis.</text>
</comment>
<comment type="domain">
    <text evidence="4">UcdA has an A-T-TE domain architecture. The adenylation (A) domain recognizes and activates the aryl acid substrates, and loads them onto the thiolation (T) domain. The thioesterase (TE) domain shares the missing condensation (C) domain function, and is responsible for condensation and final product release.</text>
</comment>
<comment type="similarity">
    <text evidence="6">Belongs to the NRP synthetase family.</text>
</comment>